<organism>
    <name type="scientific">Leptospira interrogans serogroup Icterohaemorrhagiae serovar Lai (strain 56601)</name>
    <dbReference type="NCBI Taxonomy" id="189518"/>
    <lineage>
        <taxon>Bacteria</taxon>
        <taxon>Pseudomonadati</taxon>
        <taxon>Spirochaetota</taxon>
        <taxon>Spirochaetia</taxon>
        <taxon>Leptospirales</taxon>
        <taxon>Leptospiraceae</taxon>
        <taxon>Leptospira</taxon>
    </lineage>
</organism>
<dbReference type="EC" id="6.3.5.3" evidence="1"/>
<dbReference type="EC" id="3.5.1.2" evidence="1"/>
<dbReference type="EMBL" id="AE010300">
    <property type="protein sequence ID" value="AAN50709.1"/>
    <property type="molecule type" value="Genomic_DNA"/>
</dbReference>
<dbReference type="RefSeq" id="NP_713691.1">
    <property type="nucleotide sequence ID" value="NC_004342.2"/>
</dbReference>
<dbReference type="RefSeq" id="WP_000686200.1">
    <property type="nucleotide sequence ID" value="NC_004342.2"/>
</dbReference>
<dbReference type="SMR" id="Q8F0I2"/>
<dbReference type="STRING" id="189518.LA_3511"/>
<dbReference type="PaxDb" id="189518-LA_3511"/>
<dbReference type="EnsemblBacteria" id="AAN50709">
    <property type="protein sequence ID" value="AAN50709"/>
    <property type="gene ID" value="LA_3511"/>
</dbReference>
<dbReference type="GeneID" id="61144024"/>
<dbReference type="KEGG" id="lil:LA_3511"/>
<dbReference type="PATRIC" id="fig|189518.3.peg.3482"/>
<dbReference type="HOGENOM" id="CLU_001031_3_1_12"/>
<dbReference type="InParanoid" id="Q8F0I2"/>
<dbReference type="OrthoDB" id="9804441at2"/>
<dbReference type="UniPathway" id="UPA00074">
    <property type="reaction ID" value="UER00128"/>
</dbReference>
<dbReference type="Proteomes" id="UP000001408">
    <property type="component" value="Chromosome I"/>
</dbReference>
<dbReference type="GO" id="GO:0005737">
    <property type="term" value="C:cytoplasm"/>
    <property type="evidence" value="ECO:0007669"/>
    <property type="project" value="UniProtKB-SubCell"/>
</dbReference>
<dbReference type="GO" id="GO:0005524">
    <property type="term" value="F:ATP binding"/>
    <property type="evidence" value="ECO:0007669"/>
    <property type="project" value="UniProtKB-KW"/>
</dbReference>
<dbReference type="GO" id="GO:0004359">
    <property type="term" value="F:glutaminase activity"/>
    <property type="evidence" value="ECO:0007669"/>
    <property type="project" value="UniProtKB-EC"/>
</dbReference>
<dbReference type="GO" id="GO:0004642">
    <property type="term" value="F:phosphoribosylformylglycinamidine synthase activity"/>
    <property type="evidence" value="ECO:0007669"/>
    <property type="project" value="UniProtKB-UniRule"/>
</dbReference>
<dbReference type="GO" id="GO:0006189">
    <property type="term" value="P:'de novo' IMP biosynthetic process"/>
    <property type="evidence" value="ECO:0007669"/>
    <property type="project" value="UniProtKB-UniRule"/>
</dbReference>
<dbReference type="CDD" id="cd01740">
    <property type="entry name" value="GATase1_FGAR_AT"/>
    <property type="match status" value="1"/>
</dbReference>
<dbReference type="Gene3D" id="3.40.50.880">
    <property type="match status" value="1"/>
</dbReference>
<dbReference type="HAMAP" id="MF_00421">
    <property type="entry name" value="PurQ"/>
    <property type="match status" value="1"/>
</dbReference>
<dbReference type="InterPro" id="IPR029062">
    <property type="entry name" value="Class_I_gatase-like"/>
</dbReference>
<dbReference type="InterPro" id="IPR010075">
    <property type="entry name" value="PRibForGlyAmidine_synth_PurQ"/>
</dbReference>
<dbReference type="NCBIfam" id="TIGR01737">
    <property type="entry name" value="FGAM_synth_I"/>
    <property type="match status" value="1"/>
</dbReference>
<dbReference type="NCBIfam" id="NF002957">
    <property type="entry name" value="PRK03619.1"/>
    <property type="match status" value="1"/>
</dbReference>
<dbReference type="PANTHER" id="PTHR47552">
    <property type="entry name" value="PHOSPHORIBOSYLFORMYLGLYCINAMIDINE SYNTHASE SUBUNIT PURQ"/>
    <property type="match status" value="1"/>
</dbReference>
<dbReference type="PANTHER" id="PTHR47552:SF1">
    <property type="entry name" value="PHOSPHORIBOSYLFORMYLGLYCINAMIDINE SYNTHASE SUBUNIT PURQ"/>
    <property type="match status" value="1"/>
</dbReference>
<dbReference type="Pfam" id="PF13507">
    <property type="entry name" value="GATase_5"/>
    <property type="match status" value="1"/>
</dbReference>
<dbReference type="PIRSF" id="PIRSF001586">
    <property type="entry name" value="FGAM_synth_I"/>
    <property type="match status" value="1"/>
</dbReference>
<dbReference type="SMART" id="SM01211">
    <property type="entry name" value="GATase_5"/>
    <property type="match status" value="1"/>
</dbReference>
<dbReference type="SUPFAM" id="SSF52317">
    <property type="entry name" value="Class I glutamine amidotransferase-like"/>
    <property type="match status" value="1"/>
</dbReference>
<dbReference type="PROSITE" id="PS51273">
    <property type="entry name" value="GATASE_TYPE_1"/>
    <property type="match status" value="1"/>
</dbReference>
<comment type="function">
    <text evidence="1">Part of the phosphoribosylformylglycinamidine synthase complex involved in the purines biosynthetic pathway. Catalyzes the ATP-dependent conversion of formylglycinamide ribonucleotide (FGAR) and glutamine to yield formylglycinamidine ribonucleotide (FGAM) and glutamate. The FGAM synthase complex is composed of three subunits. PurQ produces an ammonia molecule by converting glutamine to glutamate. PurL transfers the ammonia molecule to FGAR to form FGAM in an ATP-dependent manner. PurS interacts with PurQ and PurL and is thought to assist in the transfer of the ammonia molecule from PurQ to PurL.</text>
</comment>
<comment type="catalytic activity">
    <reaction evidence="1">
        <text>N(2)-formyl-N(1)-(5-phospho-beta-D-ribosyl)glycinamide + L-glutamine + ATP + H2O = 2-formamido-N(1)-(5-O-phospho-beta-D-ribosyl)acetamidine + L-glutamate + ADP + phosphate + H(+)</text>
        <dbReference type="Rhea" id="RHEA:17129"/>
        <dbReference type="ChEBI" id="CHEBI:15377"/>
        <dbReference type="ChEBI" id="CHEBI:15378"/>
        <dbReference type="ChEBI" id="CHEBI:29985"/>
        <dbReference type="ChEBI" id="CHEBI:30616"/>
        <dbReference type="ChEBI" id="CHEBI:43474"/>
        <dbReference type="ChEBI" id="CHEBI:58359"/>
        <dbReference type="ChEBI" id="CHEBI:147286"/>
        <dbReference type="ChEBI" id="CHEBI:147287"/>
        <dbReference type="ChEBI" id="CHEBI:456216"/>
        <dbReference type="EC" id="6.3.5.3"/>
    </reaction>
</comment>
<comment type="catalytic activity">
    <reaction evidence="1">
        <text>L-glutamine + H2O = L-glutamate + NH4(+)</text>
        <dbReference type="Rhea" id="RHEA:15889"/>
        <dbReference type="ChEBI" id="CHEBI:15377"/>
        <dbReference type="ChEBI" id="CHEBI:28938"/>
        <dbReference type="ChEBI" id="CHEBI:29985"/>
        <dbReference type="ChEBI" id="CHEBI:58359"/>
        <dbReference type="EC" id="3.5.1.2"/>
    </reaction>
</comment>
<comment type="pathway">
    <text evidence="1">Purine metabolism; IMP biosynthesis via de novo pathway; 5-amino-1-(5-phospho-D-ribosyl)imidazole from N(2)-formyl-N(1)-(5-phospho-D-ribosyl)glycinamide: step 1/2.</text>
</comment>
<comment type="subunit">
    <text evidence="1">Part of the FGAM synthase complex composed of 1 PurL, 1 PurQ and 2 PurS subunits.</text>
</comment>
<comment type="subcellular location">
    <subcellularLocation>
        <location evidence="1">Cytoplasm</location>
    </subcellularLocation>
</comment>
<reference key="1">
    <citation type="journal article" date="2003" name="Nature">
        <title>Unique physiological and pathogenic features of Leptospira interrogans revealed by whole-genome sequencing.</title>
        <authorList>
            <person name="Ren S.-X."/>
            <person name="Fu G."/>
            <person name="Jiang X.-G."/>
            <person name="Zeng R."/>
            <person name="Miao Y.-G."/>
            <person name="Xu H."/>
            <person name="Zhang Y.-X."/>
            <person name="Xiong H."/>
            <person name="Lu G."/>
            <person name="Lu L.-F."/>
            <person name="Jiang H.-Q."/>
            <person name="Jia J."/>
            <person name="Tu Y.-F."/>
            <person name="Jiang J.-X."/>
            <person name="Gu W.-Y."/>
            <person name="Zhang Y.-Q."/>
            <person name="Cai Z."/>
            <person name="Sheng H.-H."/>
            <person name="Yin H.-F."/>
            <person name="Zhang Y."/>
            <person name="Zhu G.-F."/>
            <person name="Wan M."/>
            <person name="Huang H.-L."/>
            <person name="Qian Z."/>
            <person name="Wang S.-Y."/>
            <person name="Ma W."/>
            <person name="Yao Z.-J."/>
            <person name="Shen Y."/>
            <person name="Qiang B.-Q."/>
            <person name="Xia Q.-C."/>
            <person name="Guo X.-K."/>
            <person name="Danchin A."/>
            <person name="Saint Girons I."/>
            <person name="Somerville R.L."/>
            <person name="Wen Y.-M."/>
            <person name="Shi M.-H."/>
            <person name="Chen Z."/>
            <person name="Xu J.-G."/>
            <person name="Zhao G.-P."/>
        </authorList>
    </citation>
    <scope>NUCLEOTIDE SEQUENCE [LARGE SCALE GENOMIC DNA]</scope>
    <source>
        <strain>56601</strain>
    </source>
</reference>
<gene>
    <name evidence="1" type="primary">purQ</name>
    <name type="ordered locus">LA_3511</name>
</gene>
<accession>Q8F0I2</accession>
<protein>
    <recommendedName>
        <fullName evidence="1">Phosphoribosylformylglycinamidine synthase subunit PurQ</fullName>
        <shortName evidence="1">FGAM synthase</shortName>
        <ecNumber evidence="1">6.3.5.3</ecNumber>
    </recommendedName>
    <alternativeName>
        <fullName evidence="1">Formylglycinamide ribonucleotide amidotransferase subunit I</fullName>
        <shortName evidence="1">FGAR amidotransferase I</shortName>
        <shortName evidence="1">FGAR-AT I</shortName>
    </alternativeName>
    <alternativeName>
        <fullName evidence="1">Glutaminase PurQ</fullName>
        <ecNumber evidence="1">3.5.1.2</ecNumber>
    </alternativeName>
    <alternativeName>
        <fullName evidence="1">Phosphoribosylformylglycinamidine synthase subunit I</fullName>
    </alternativeName>
</protein>
<sequence length="219" mass="24117">MKIAVITFPGSNCDSDIYRVLKDQYNAEVDRIWHRDGLDKKYELVILPGGFSYGDYLRSGAMAGFSPVMKSVKEHVDKGGKLFGICNGFQILTEAEYLPGALIRNKTLKYICKTVILTKGSAGNPVTASMDVRKELKIPIAHADGCYYATSDVLKQLEDEDRILFRYSGENPNGSLDSIAGITSKNFKIVGMMPHPERAMNPITGEMDGKVVLDLILGS</sequence>
<evidence type="ECO:0000255" key="1">
    <source>
        <dbReference type="HAMAP-Rule" id="MF_00421"/>
    </source>
</evidence>
<keyword id="KW-0067">ATP-binding</keyword>
<keyword id="KW-0963">Cytoplasm</keyword>
<keyword id="KW-0315">Glutamine amidotransferase</keyword>
<keyword id="KW-0378">Hydrolase</keyword>
<keyword id="KW-0436">Ligase</keyword>
<keyword id="KW-0547">Nucleotide-binding</keyword>
<keyword id="KW-0658">Purine biosynthesis</keyword>
<keyword id="KW-1185">Reference proteome</keyword>
<proteinExistence type="inferred from homology"/>
<feature type="chain" id="PRO_0000100565" description="Phosphoribosylformylglycinamidine synthase subunit PurQ">
    <location>
        <begin position="1"/>
        <end position="219"/>
    </location>
</feature>
<feature type="domain" description="Glutamine amidotransferase type-1" evidence="1">
    <location>
        <begin position="2"/>
        <end position="219"/>
    </location>
</feature>
<feature type="active site" description="Nucleophile" evidence="1">
    <location>
        <position position="86"/>
    </location>
</feature>
<feature type="active site" evidence="1">
    <location>
        <position position="195"/>
    </location>
</feature>
<feature type="active site" evidence="1">
    <location>
        <position position="197"/>
    </location>
</feature>
<name>PURQ_LEPIN</name>